<reference key="1">
    <citation type="journal article" date="2009" name="Mol. Biol. Evol.">
        <title>Molecular evolution, functional variation, and proposed nomenclature of the gene family that includes sphingomyelinase D in sicariid spider venoms.</title>
        <authorList>
            <person name="Binford G.J."/>
            <person name="Bodner M.R."/>
            <person name="Cordes M.H."/>
            <person name="Baldwin K.L."/>
            <person name="Rynerson M.R."/>
            <person name="Burns S.N."/>
            <person name="Zobel-Thropp P.A."/>
        </authorList>
    </citation>
    <scope>NUCLEOTIDE SEQUENCE [MRNA]</scope>
    <scope>NOMENCLATURE</scope>
    <source>
        <tissue>Venom gland</tissue>
    </source>
</reference>
<comment type="function">
    <text evidence="1 3">Dermonecrotic toxins cleave the phosphodiester linkage between the phosphate and headgroup of certain phospholipids (sphingolipid and lysolipid substrates), forming an alcohol (often choline) and a cyclic phosphate (By similarity). This toxin acts on sphingomyelin (SM) (By similarity). It may also act on ceramide phosphoethanolamine (CPE), lysophosphatidylcholine (LPC) and lysophosphatidylethanolamine (LPE), but not on lysophosphatidylserine (LPS), and lysophosphatidylglycerol (LPG) (By similarity). It acts by transphosphatidylation, releasing exclusively cyclic phosphate products as second products (By similarity). Induces dermonecrosis, hemolysis, increased vascular permeability, edema, inflammatory response, and platelet aggregation (By similarity).</text>
</comment>
<comment type="catalytic activity">
    <reaction evidence="1">
        <text>an N-(acyl)-sphingosylphosphocholine = an N-(acyl)-sphingosyl-1,3-cyclic phosphate + choline</text>
        <dbReference type="Rhea" id="RHEA:60652"/>
        <dbReference type="ChEBI" id="CHEBI:15354"/>
        <dbReference type="ChEBI" id="CHEBI:64583"/>
        <dbReference type="ChEBI" id="CHEBI:143892"/>
    </reaction>
</comment>
<comment type="catalytic activity">
    <reaction evidence="1">
        <text>an N-(acyl)-sphingosylphosphoethanolamine = an N-(acyl)-sphingosyl-1,3-cyclic phosphate + ethanolamine</text>
        <dbReference type="Rhea" id="RHEA:60648"/>
        <dbReference type="ChEBI" id="CHEBI:57603"/>
        <dbReference type="ChEBI" id="CHEBI:143891"/>
        <dbReference type="ChEBI" id="CHEBI:143892"/>
    </reaction>
</comment>
<comment type="catalytic activity">
    <reaction evidence="1">
        <text>a 1-acyl-sn-glycero-3-phosphocholine = a 1-acyl-sn-glycero-2,3-cyclic phosphate + choline</text>
        <dbReference type="Rhea" id="RHEA:60700"/>
        <dbReference type="ChEBI" id="CHEBI:15354"/>
        <dbReference type="ChEBI" id="CHEBI:58168"/>
        <dbReference type="ChEBI" id="CHEBI:143947"/>
    </reaction>
</comment>
<comment type="catalytic activity">
    <reaction evidence="1">
        <text>a 1-acyl-sn-glycero-3-phosphoethanolamine = a 1-acyl-sn-glycero-2,3-cyclic phosphate + ethanolamine</text>
        <dbReference type="Rhea" id="RHEA:60704"/>
        <dbReference type="ChEBI" id="CHEBI:57603"/>
        <dbReference type="ChEBI" id="CHEBI:64381"/>
        <dbReference type="ChEBI" id="CHEBI:143947"/>
    </reaction>
</comment>
<comment type="cofactor">
    <cofactor evidence="5">
        <name>Mg(2+)</name>
        <dbReference type="ChEBI" id="CHEBI:18420"/>
    </cofactor>
    <text evidence="5">Binds 1 Mg(2+) ion per subunit.</text>
</comment>
<comment type="subcellular location">
    <subcellularLocation>
        <location evidence="8">Secreted</location>
    </subcellularLocation>
</comment>
<comment type="tissue specificity">
    <text evidence="8">Expressed by the venom gland.</text>
</comment>
<comment type="similarity">
    <text evidence="7">Belongs to the arthropod phospholipase D family. Class II subfamily.</text>
</comment>
<comment type="caution">
    <text evidence="1 2 4">The most common activity assay for dermonecrotic toxins detects enzymatic activity by monitoring choline release from substrate. Liberation of choline from sphingomyelin (SM) or lysophosphatidylcholine (LPC) is commonly assumed to result from substrate hydrolysis, giving either ceramide-1-phosphate (C1P) or lysophosphatidic acid (LPA), respectively, as a second product. However, two studies from Lajoie and colleagues (2013 and 2015) report the observation of exclusive formation of cyclic phosphate products as second products, resulting from intramolecular transphosphatidylation. Cyclic phosphates have vastly different biological properties from their monoester counterparts, and they may be relevant to the pathology of brown spider envenomation.</text>
</comment>
<proteinExistence type="evidence at transcript level"/>
<evidence type="ECO:0000250" key="1">
    <source>
        <dbReference type="UniProtKB" id="A0A0D4WTV1"/>
    </source>
</evidence>
<evidence type="ECO:0000250" key="2">
    <source>
        <dbReference type="UniProtKB" id="A0A0D4WV12"/>
    </source>
</evidence>
<evidence type="ECO:0000250" key="3">
    <source>
        <dbReference type="UniProtKB" id="P0CE80"/>
    </source>
</evidence>
<evidence type="ECO:0000250" key="4">
    <source>
        <dbReference type="UniProtKB" id="Q4ZFU2"/>
    </source>
</evidence>
<evidence type="ECO:0000250" key="5">
    <source>
        <dbReference type="UniProtKB" id="Q8I914"/>
    </source>
</evidence>
<evidence type="ECO:0000303" key="6">
    <source>
    </source>
</evidence>
<evidence type="ECO:0000305" key="7"/>
<evidence type="ECO:0000305" key="8">
    <source>
    </source>
</evidence>
<protein>
    <recommendedName>
        <fullName evidence="6">Dermonecrotic toxin SpeSicTox-betaIB2a</fullName>
        <ecNumber evidence="4">4.6.1.-</ecNumber>
    </recommendedName>
    <alternativeName>
        <fullName>Phospholipase D</fullName>
        <shortName>PLD</shortName>
    </alternativeName>
    <alternativeName>
        <fullName>Sphingomyelin phosphodiesterase D</fullName>
        <shortName>SMD</shortName>
        <shortName>SMase D</shortName>
        <shortName>Sphingomyelinase D</shortName>
    </alternativeName>
</protein>
<accession>C0JB37</accession>
<dbReference type="EC" id="4.6.1.-" evidence="4"/>
<dbReference type="EMBL" id="FJ171472">
    <property type="protein sequence ID" value="ACN48968.1"/>
    <property type="molecule type" value="mRNA"/>
</dbReference>
<dbReference type="SMR" id="C0JB37"/>
<dbReference type="GO" id="GO:0005576">
    <property type="term" value="C:extracellular region"/>
    <property type="evidence" value="ECO:0007669"/>
    <property type="project" value="UniProtKB-SubCell"/>
</dbReference>
<dbReference type="GO" id="GO:0016829">
    <property type="term" value="F:lyase activity"/>
    <property type="evidence" value="ECO:0007669"/>
    <property type="project" value="UniProtKB-KW"/>
</dbReference>
<dbReference type="GO" id="GO:0046872">
    <property type="term" value="F:metal ion binding"/>
    <property type="evidence" value="ECO:0007669"/>
    <property type="project" value="UniProtKB-KW"/>
</dbReference>
<dbReference type="GO" id="GO:0008081">
    <property type="term" value="F:phosphoric diester hydrolase activity"/>
    <property type="evidence" value="ECO:0007669"/>
    <property type="project" value="InterPro"/>
</dbReference>
<dbReference type="GO" id="GO:0090729">
    <property type="term" value="F:toxin activity"/>
    <property type="evidence" value="ECO:0007669"/>
    <property type="project" value="UniProtKB-KW"/>
</dbReference>
<dbReference type="GO" id="GO:0031640">
    <property type="term" value="P:killing of cells of another organism"/>
    <property type="evidence" value="ECO:0007669"/>
    <property type="project" value="UniProtKB-KW"/>
</dbReference>
<dbReference type="GO" id="GO:0016042">
    <property type="term" value="P:lipid catabolic process"/>
    <property type="evidence" value="ECO:0007669"/>
    <property type="project" value="UniProtKB-KW"/>
</dbReference>
<dbReference type="CDD" id="cd08576">
    <property type="entry name" value="GDPD_like_SMaseD_PLD"/>
    <property type="match status" value="1"/>
</dbReference>
<dbReference type="Gene3D" id="3.20.20.190">
    <property type="entry name" value="Phosphatidylinositol (PI) phosphodiesterase"/>
    <property type="match status" value="1"/>
</dbReference>
<dbReference type="InterPro" id="IPR017946">
    <property type="entry name" value="PLC-like_Pdiesterase_TIM-brl"/>
</dbReference>
<dbReference type="Pfam" id="PF13653">
    <property type="entry name" value="GDPD_2"/>
    <property type="match status" value="1"/>
</dbReference>
<dbReference type="SUPFAM" id="SSF51695">
    <property type="entry name" value="PLC-like phosphodiesterases"/>
    <property type="match status" value="1"/>
</dbReference>
<feature type="chain" id="PRO_0000392850" description="Dermonecrotic toxin SpeSicTox-betaIB2a">
    <location>
        <begin position="1" status="less than"/>
        <end position="272"/>
    </location>
</feature>
<feature type="active site" evidence="5">
    <location>
        <position position="5"/>
    </location>
</feature>
<feature type="active site" description="Nucleophile" evidence="5">
    <location>
        <position position="41"/>
    </location>
</feature>
<feature type="binding site" evidence="5">
    <location>
        <position position="25"/>
    </location>
    <ligand>
        <name>Mg(2+)</name>
        <dbReference type="ChEBI" id="CHEBI:18420"/>
    </ligand>
</feature>
<feature type="binding site" evidence="5">
    <location>
        <position position="27"/>
    </location>
    <ligand>
        <name>Mg(2+)</name>
        <dbReference type="ChEBI" id="CHEBI:18420"/>
    </ligand>
</feature>
<feature type="binding site" evidence="5">
    <location>
        <position position="85"/>
    </location>
    <ligand>
        <name>Mg(2+)</name>
        <dbReference type="ChEBI" id="CHEBI:18420"/>
    </ligand>
</feature>
<feature type="disulfide bond" evidence="3">
    <location>
        <begin position="45"/>
        <end position="51"/>
    </location>
</feature>
<feature type="disulfide bond" evidence="3">
    <location>
        <begin position="47"/>
        <end position="191"/>
    </location>
</feature>
<feature type="non-terminal residue">
    <location>
        <position position="1"/>
    </location>
</feature>
<organism>
    <name type="scientific">Sicarius peruensis</name>
    <name type="common">Six-eyed sand spider</name>
    <dbReference type="NCBI Taxonomy" id="571541"/>
    <lineage>
        <taxon>Eukaryota</taxon>
        <taxon>Metazoa</taxon>
        <taxon>Ecdysozoa</taxon>
        <taxon>Arthropoda</taxon>
        <taxon>Chelicerata</taxon>
        <taxon>Arachnida</taxon>
        <taxon>Araneae</taxon>
        <taxon>Araneomorphae</taxon>
        <taxon>Haplogynae</taxon>
        <taxon>Scytodoidea</taxon>
        <taxon>Sicariidae</taxon>
        <taxon>Sicarius</taxon>
    </lineage>
</organism>
<name>B1LA_SICPE</name>
<sequence length="272" mass="31097">WIMGHMVNDLSLVDEFLNDGANSLELDVEFSSSGTAQRTHHGFPCDCFRYCTNSEKFSTYLDYIRQLTTPGNSKFRSRLILLVMDLKLNPLSSSAAYNAGADVALNLLNHYWQRGESEARAYIVLSLSTIDGAEFISGFKSTMEKEGFADKYYDKIGWDFSGNEDLQQIRDVLENYGIREHIWQGDGITNCLPRGDSRLKEALNLRYSPSYIYADKVYTWSIDEENSIKHALWLGVDGVMTNHPERVIEVLGKSKYSDKFRLATYDDSPWEK</sequence>
<keyword id="KW-0204">Cytolysis</keyword>
<keyword id="KW-1061">Dermonecrotic toxin</keyword>
<keyword id="KW-1015">Disulfide bond</keyword>
<keyword id="KW-0354">Hemolysis</keyword>
<keyword id="KW-0442">Lipid degradation</keyword>
<keyword id="KW-0443">Lipid metabolism</keyword>
<keyword id="KW-0456">Lyase</keyword>
<keyword id="KW-0460">Magnesium</keyword>
<keyword id="KW-0479">Metal-binding</keyword>
<keyword id="KW-0964">Secreted</keyword>
<keyword id="KW-0800">Toxin</keyword>